<reference key="1">
    <citation type="journal article" date="2008" name="Environ. Microbiol.">
        <title>The complete genome sequence of Moorella thermoacetica (f. Clostridium thermoaceticum).</title>
        <authorList>
            <person name="Pierce E."/>
            <person name="Xie G."/>
            <person name="Barabote R.D."/>
            <person name="Saunders E."/>
            <person name="Han C.S."/>
            <person name="Detter J.C."/>
            <person name="Richardson P."/>
            <person name="Brettin T.S."/>
            <person name="Das A."/>
            <person name="Ljungdahl L.G."/>
            <person name="Ragsdale S.W."/>
        </authorList>
    </citation>
    <scope>NUCLEOTIDE SEQUENCE [LARGE SCALE GENOMIC DNA]</scope>
    <source>
        <strain>ATCC 39073 / JCM 9320</strain>
    </source>
</reference>
<gene>
    <name evidence="1" type="primary">xseA</name>
    <name type="ordered locus">Moth_1515</name>
</gene>
<comment type="function">
    <text evidence="1">Bidirectionally degrades single-stranded DNA into large acid-insoluble oligonucleotides, which are then degraded further into small acid-soluble oligonucleotides.</text>
</comment>
<comment type="catalytic activity">
    <reaction evidence="1">
        <text>Exonucleolytic cleavage in either 5'- to 3'- or 3'- to 5'-direction to yield nucleoside 5'-phosphates.</text>
        <dbReference type="EC" id="3.1.11.6"/>
    </reaction>
</comment>
<comment type="subunit">
    <text evidence="1">Heterooligomer composed of large and small subunits.</text>
</comment>
<comment type="subcellular location">
    <subcellularLocation>
        <location evidence="1">Cytoplasm</location>
    </subcellularLocation>
</comment>
<comment type="similarity">
    <text evidence="1">Belongs to the XseA family.</text>
</comment>
<proteinExistence type="inferred from homology"/>
<accession>Q2RIB5</accession>
<protein>
    <recommendedName>
        <fullName evidence="1">Exodeoxyribonuclease 7 large subunit</fullName>
        <ecNumber evidence="1">3.1.11.6</ecNumber>
    </recommendedName>
    <alternativeName>
        <fullName evidence="1">Exodeoxyribonuclease VII large subunit</fullName>
        <shortName evidence="1">Exonuclease VII large subunit</shortName>
    </alternativeName>
</protein>
<feature type="chain" id="PRO_1000122073" description="Exodeoxyribonuclease 7 large subunit">
    <location>
        <begin position="1"/>
        <end position="402"/>
    </location>
</feature>
<name>EX7L_MOOTA</name>
<organism>
    <name type="scientific">Moorella thermoacetica (strain ATCC 39073 / JCM 9320)</name>
    <dbReference type="NCBI Taxonomy" id="264732"/>
    <lineage>
        <taxon>Bacteria</taxon>
        <taxon>Bacillati</taxon>
        <taxon>Bacillota</taxon>
        <taxon>Clostridia</taxon>
        <taxon>Moorellales</taxon>
        <taxon>Moorellaceae</taxon>
        <taxon>Moorella</taxon>
    </lineage>
</organism>
<dbReference type="EC" id="3.1.11.6" evidence="1"/>
<dbReference type="EMBL" id="CP000232">
    <property type="protein sequence ID" value="ABC19824.1"/>
    <property type="molecule type" value="Genomic_DNA"/>
</dbReference>
<dbReference type="RefSeq" id="YP_430367.1">
    <property type="nucleotide sequence ID" value="NC_007644.1"/>
</dbReference>
<dbReference type="SMR" id="Q2RIB5"/>
<dbReference type="STRING" id="264732.Moth_1515"/>
<dbReference type="EnsemblBacteria" id="ABC19824">
    <property type="protein sequence ID" value="ABC19824"/>
    <property type="gene ID" value="Moth_1515"/>
</dbReference>
<dbReference type="KEGG" id="mta:Moth_1515"/>
<dbReference type="PATRIC" id="fig|264732.11.peg.1641"/>
<dbReference type="eggNOG" id="COG1570">
    <property type="taxonomic scope" value="Bacteria"/>
</dbReference>
<dbReference type="HOGENOM" id="CLU_023625_3_1_9"/>
<dbReference type="OrthoDB" id="9802795at2"/>
<dbReference type="GO" id="GO:0005737">
    <property type="term" value="C:cytoplasm"/>
    <property type="evidence" value="ECO:0007669"/>
    <property type="project" value="UniProtKB-SubCell"/>
</dbReference>
<dbReference type="GO" id="GO:0009318">
    <property type="term" value="C:exodeoxyribonuclease VII complex"/>
    <property type="evidence" value="ECO:0007669"/>
    <property type="project" value="InterPro"/>
</dbReference>
<dbReference type="GO" id="GO:0008855">
    <property type="term" value="F:exodeoxyribonuclease VII activity"/>
    <property type="evidence" value="ECO:0007669"/>
    <property type="project" value="UniProtKB-UniRule"/>
</dbReference>
<dbReference type="GO" id="GO:0003676">
    <property type="term" value="F:nucleic acid binding"/>
    <property type="evidence" value="ECO:0007669"/>
    <property type="project" value="InterPro"/>
</dbReference>
<dbReference type="GO" id="GO:0006308">
    <property type="term" value="P:DNA catabolic process"/>
    <property type="evidence" value="ECO:0007669"/>
    <property type="project" value="UniProtKB-UniRule"/>
</dbReference>
<dbReference type="CDD" id="cd04489">
    <property type="entry name" value="ExoVII_LU_OBF"/>
    <property type="match status" value="1"/>
</dbReference>
<dbReference type="HAMAP" id="MF_00378">
    <property type="entry name" value="Exonuc_7_L"/>
    <property type="match status" value="1"/>
</dbReference>
<dbReference type="InterPro" id="IPR003753">
    <property type="entry name" value="Exonuc_VII_L"/>
</dbReference>
<dbReference type="InterPro" id="IPR020579">
    <property type="entry name" value="Exonuc_VII_lsu_C"/>
</dbReference>
<dbReference type="InterPro" id="IPR025824">
    <property type="entry name" value="OB-fold_nuc-bd_dom"/>
</dbReference>
<dbReference type="NCBIfam" id="TIGR00237">
    <property type="entry name" value="xseA"/>
    <property type="match status" value="1"/>
</dbReference>
<dbReference type="PANTHER" id="PTHR30008">
    <property type="entry name" value="EXODEOXYRIBONUCLEASE 7 LARGE SUBUNIT"/>
    <property type="match status" value="1"/>
</dbReference>
<dbReference type="PANTHER" id="PTHR30008:SF0">
    <property type="entry name" value="EXODEOXYRIBONUCLEASE 7 LARGE SUBUNIT"/>
    <property type="match status" value="1"/>
</dbReference>
<dbReference type="Pfam" id="PF02601">
    <property type="entry name" value="Exonuc_VII_L"/>
    <property type="match status" value="2"/>
</dbReference>
<dbReference type="Pfam" id="PF13742">
    <property type="entry name" value="tRNA_anti_2"/>
    <property type="match status" value="1"/>
</dbReference>
<keyword id="KW-0963">Cytoplasm</keyword>
<keyword id="KW-0269">Exonuclease</keyword>
<keyword id="KW-0378">Hydrolase</keyword>
<keyword id="KW-0540">Nuclease</keyword>
<evidence type="ECO:0000255" key="1">
    <source>
        <dbReference type="HAMAP-Rule" id="MF_00378"/>
    </source>
</evidence>
<sequence length="402" mass="44118">MPEVKVLAVRELTAYLQRLLANDGRLANVWVKGEISNLRSPTSGHLYFSLKDQAATLRCVMFQGRSRGLSLGLRDGLEVIARGQVAIYPRDGVYQLYVAEIFPAGTGLASLALQELTARLEREGLFAADRKRPLPLLPRRVGLVTSPTGAALRDMITISRRRFPGIELILAPARVQGEVAPRQLALALELLAKRGGVDVIIIGRGGGSAEDLSAFNTELVARAIYACPVPVIAAVGHETDLTLADRVADRRAPTPSAAAEMAVPVRAELEQRLKSLAERARRGMEHRLELARARLERLTKSSGLDRPRQELYYRQQYVDGLEQRLLASWERRSREREQGLNLLAARLEAASPLAILARGYAVCRRPGDGAPLKSSREVLPGEKVEVILKEGLLRCQVEEVGG</sequence>